<name>YEGS_YERPP</name>
<proteinExistence type="inferred from homology"/>
<organism>
    <name type="scientific">Yersinia pestis (strain Pestoides F)</name>
    <dbReference type="NCBI Taxonomy" id="386656"/>
    <lineage>
        <taxon>Bacteria</taxon>
        <taxon>Pseudomonadati</taxon>
        <taxon>Pseudomonadota</taxon>
        <taxon>Gammaproteobacteria</taxon>
        <taxon>Enterobacterales</taxon>
        <taxon>Yersiniaceae</taxon>
        <taxon>Yersinia</taxon>
    </lineage>
</organism>
<evidence type="ECO:0000255" key="1">
    <source>
        <dbReference type="HAMAP-Rule" id="MF_01377"/>
    </source>
</evidence>
<comment type="function">
    <text evidence="1">Probably phosphorylates lipids; the in vivo substrate is unknown.</text>
</comment>
<comment type="cofactor">
    <cofactor evidence="1">
        <name>Mg(2+)</name>
        <dbReference type="ChEBI" id="CHEBI:18420"/>
    </cofactor>
    <cofactor evidence="1">
        <name>Ca(2+)</name>
        <dbReference type="ChEBI" id="CHEBI:29108"/>
    </cofactor>
    <text evidence="1">Binds 1 Mg(2+) ion per subunit. Ca(2+) may be able to substitute.</text>
</comment>
<comment type="subcellular location">
    <subcellularLocation>
        <location evidence="1">Cytoplasm</location>
    </subcellularLocation>
</comment>
<comment type="similarity">
    <text evidence="1">Belongs to the diacylglycerol/lipid kinase family. YegS lipid kinase subfamily.</text>
</comment>
<reference key="1">
    <citation type="submission" date="2007-02" db="EMBL/GenBank/DDBJ databases">
        <title>Complete sequence of chromosome of Yersinia pestis Pestoides F.</title>
        <authorList>
            <consortium name="US DOE Joint Genome Institute"/>
            <person name="Copeland A."/>
            <person name="Lucas S."/>
            <person name="Lapidus A."/>
            <person name="Barry K."/>
            <person name="Detter J.C."/>
            <person name="Glavina del Rio T."/>
            <person name="Hammon N."/>
            <person name="Israni S."/>
            <person name="Dalin E."/>
            <person name="Tice H."/>
            <person name="Pitluck S."/>
            <person name="Di Bartolo G."/>
            <person name="Chain P."/>
            <person name="Malfatti S."/>
            <person name="Shin M."/>
            <person name="Vergez L."/>
            <person name="Schmutz J."/>
            <person name="Larimer F."/>
            <person name="Land M."/>
            <person name="Hauser L."/>
            <person name="Worsham P."/>
            <person name="Chu M."/>
            <person name="Bearden S."/>
            <person name="Garcia E."/>
            <person name="Richardson P."/>
        </authorList>
    </citation>
    <scope>NUCLEOTIDE SEQUENCE [LARGE SCALE GENOMIC DNA]</scope>
    <source>
        <strain>Pestoides F</strain>
    </source>
</reference>
<accession>A4TMR9</accession>
<gene>
    <name type="ordered locus">YPDSF_2206</name>
</gene>
<feature type="chain" id="PRO_1000068257" description="Probable lipid kinase YegS-like">
    <location>
        <begin position="1"/>
        <end position="296"/>
    </location>
</feature>
<feature type="domain" description="DAGKc" evidence="1">
    <location>
        <begin position="1"/>
        <end position="130"/>
    </location>
</feature>
<feature type="active site" description="Proton acceptor" evidence="1">
    <location>
        <position position="268"/>
    </location>
</feature>
<feature type="binding site" evidence="1">
    <location>
        <position position="37"/>
    </location>
    <ligand>
        <name>ATP</name>
        <dbReference type="ChEBI" id="CHEBI:30616"/>
    </ligand>
</feature>
<feature type="binding site" evidence="1">
    <location>
        <begin position="63"/>
        <end position="69"/>
    </location>
    <ligand>
        <name>ATP</name>
        <dbReference type="ChEBI" id="CHEBI:30616"/>
    </ligand>
</feature>
<feature type="binding site" evidence="1">
    <location>
        <position position="92"/>
    </location>
    <ligand>
        <name>ATP</name>
        <dbReference type="ChEBI" id="CHEBI:30616"/>
    </ligand>
</feature>
<feature type="binding site" evidence="1">
    <location>
        <position position="212"/>
    </location>
    <ligand>
        <name>Mg(2+)</name>
        <dbReference type="ChEBI" id="CHEBI:18420"/>
    </ligand>
</feature>
<feature type="binding site" evidence="1">
    <location>
        <position position="215"/>
    </location>
    <ligand>
        <name>Mg(2+)</name>
        <dbReference type="ChEBI" id="CHEBI:18420"/>
    </ligand>
</feature>
<feature type="binding site" evidence="1">
    <location>
        <position position="217"/>
    </location>
    <ligand>
        <name>Mg(2+)</name>
        <dbReference type="ChEBI" id="CHEBI:18420"/>
    </ligand>
</feature>
<keyword id="KW-0067">ATP-binding</keyword>
<keyword id="KW-0963">Cytoplasm</keyword>
<keyword id="KW-0418">Kinase</keyword>
<keyword id="KW-0444">Lipid biosynthesis</keyword>
<keyword id="KW-0443">Lipid metabolism</keyword>
<keyword id="KW-0460">Magnesium</keyword>
<keyword id="KW-0479">Metal-binding</keyword>
<keyword id="KW-0547">Nucleotide-binding</keyword>
<keyword id="KW-0594">Phospholipid biosynthesis</keyword>
<keyword id="KW-1208">Phospholipid metabolism</keyword>
<keyword id="KW-0808">Transferase</keyword>
<protein>
    <recommendedName>
        <fullName evidence="1">Probable lipid kinase YegS-like</fullName>
        <ecNumber evidence="1">2.7.1.-</ecNumber>
    </recommendedName>
</protein>
<sequence length="296" mass="31535">MPHTLLILNGKESGNPEVREAVKNVRDEGLTLHVRITWEHGDAKRYVEEAATLAVSTVIAGGGDGTINEVATALMSLPADKRPCLGILPLGTANDFATGCNIPLQIENALQLAVKGRAVAIDLAQVNGEHYFINMATGGFGTRITTETPDKLKAALGGVSYFIHGLMRLDALKADSCKIHGPDFHWSGDALVIGIGNGKQAGGGQLLCPDALINDGLMQLRLLTAKELLPAVLSTLFNGEKNKNVIDATVPWLDITAPNDITFNLDGEPLSGRHFHIEILPHAIQCRLPPNCPLLG</sequence>
<dbReference type="EC" id="2.7.1.-" evidence="1"/>
<dbReference type="EMBL" id="CP000668">
    <property type="protein sequence ID" value="ABP40581.1"/>
    <property type="molecule type" value="Genomic_DNA"/>
</dbReference>
<dbReference type="SMR" id="A4TMR9"/>
<dbReference type="KEGG" id="ypp:YPDSF_2206"/>
<dbReference type="PATRIC" id="fig|386656.14.peg.3686"/>
<dbReference type="GO" id="GO:0005737">
    <property type="term" value="C:cytoplasm"/>
    <property type="evidence" value="ECO:0007669"/>
    <property type="project" value="UniProtKB-SubCell"/>
</dbReference>
<dbReference type="GO" id="GO:0005886">
    <property type="term" value="C:plasma membrane"/>
    <property type="evidence" value="ECO:0007669"/>
    <property type="project" value="TreeGrafter"/>
</dbReference>
<dbReference type="GO" id="GO:0005524">
    <property type="term" value="F:ATP binding"/>
    <property type="evidence" value="ECO:0007669"/>
    <property type="project" value="UniProtKB-UniRule"/>
</dbReference>
<dbReference type="GO" id="GO:0001727">
    <property type="term" value="F:lipid kinase activity"/>
    <property type="evidence" value="ECO:0007669"/>
    <property type="project" value="UniProtKB-UniRule"/>
</dbReference>
<dbReference type="GO" id="GO:0000287">
    <property type="term" value="F:magnesium ion binding"/>
    <property type="evidence" value="ECO:0007669"/>
    <property type="project" value="UniProtKB-UniRule"/>
</dbReference>
<dbReference type="GO" id="GO:0008654">
    <property type="term" value="P:phospholipid biosynthetic process"/>
    <property type="evidence" value="ECO:0007669"/>
    <property type="project" value="UniProtKB-UniRule"/>
</dbReference>
<dbReference type="Gene3D" id="2.60.200.40">
    <property type="match status" value="1"/>
</dbReference>
<dbReference type="Gene3D" id="3.40.50.10330">
    <property type="entry name" value="Probable inorganic polyphosphate/atp-NAD kinase, domain 1"/>
    <property type="match status" value="1"/>
</dbReference>
<dbReference type="HAMAP" id="MF_01377">
    <property type="entry name" value="YegS"/>
    <property type="match status" value="1"/>
</dbReference>
<dbReference type="InterPro" id="IPR017438">
    <property type="entry name" value="ATP-NAD_kinase_N"/>
</dbReference>
<dbReference type="InterPro" id="IPR005218">
    <property type="entry name" value="Diacylglycerol/lipid_kinase"/>
</dbReference>
<dbReference type="InterPro" id="IPR001206">
    <property type="entry name" value="Diacylglycerol_kinase_cat_dom"/>
</dbReference>
<dbReference type="InterPro" id="IPR022433">
    <property type="entry name" value="Lip_kinase_YegS"/>
</dbReference>
<dbReference type="InterPro" id="IPR050187">
    <property type="entry name" value="Lipid_Phosphate_FormReg"/>
</dbReference>
<dbReference type="InterPro" id="IPR016064">
    <property type="entry name" value="NAD/diacylglycerol_kinase_sf"/>
</dbReference>
<dbReference type="InterPro" id="IPR045540">
    <property type="entry name" value="YegS/DAGK_C"/>
</dbReference>
<dbReference type="NCBIfam" id="TIGR03702">
    <property type="entry name" value="lip_kinase_YegS"/>
    <property type="match status" value="1"/>
</dbReference>
<dbReference type="NCBIfam" id="NF009602">
    <property type="entry name" value="PRK13054.1"/>
    <property type="match status" value="1"/>
</dbReference>
<dbReference type="NCBIfam" id="TIGR00147">
    <property type="entry name" value="YegS/Rv2252/BmrU family lipid kinase"/>
    <property type="match status" value="1"/>
</dbReference>
<dbReference type="PANTHER" id="PTHR12358:SF106">
    <property type="entry name" value="LIPID KINASE YEGS"/>
    <property type="match status" value="1"/>
</dbReference>
<dbReference type="PANTHER" id="PTHR12358">
    <property type="entry name" value="SPHINGOSINE KINASE"/>
    <property type="match status" value="1"/>
</dbReference>
<dbReference type="Pfam" id="PF00781">
    <property type="entry name" value="DAGK_cat"/>
    <property type="match status" value="1"/>
</dbReference>
<dbReference type="Pfam" id="PF19279">
    <property type="entry name" value="YegS_C"/>
    <property type="match status" value="1"/>
</dbReference>
<dbReference type="SMART" id="SM00046">
    <property type="entry name" value="DAGKc"/>
    <property type="match status" value="1"/>
</dbReference>
<dbReference type="SUPFAM" id="SSF111331">
    <property type="entry name" value="NAD kinase/diacylglycerol kinase-like"/>
    <property type="match status" value="1"/>
</dbReference>
<dbReference type="PROSITE" id="PS50146">
    <property type="entry name" value="DAGK"/>
    <property type="match status" value="1"/>
</dbReference>